<protein>
    <recommendedName>
        <fullName>Rho guanine nucleotide exchange factor 17</fullName>
    </recommendedName>
</protein>
<reference key="1">
    <citation type="journal article" date="2003" name="DNA Res.">
        <title>Prediction of the coding sequences of mouse homologues of KIAA gene: II. The complete nucleotide sequences of 400 mouse KIAA-homologous cDNAs identified by screening of terminal sequences of cDNA clones randomly sampled from size-fractionated libraries.</title>
        <authorList>
            <person name="Okazaki N."/>
            <person name="Kikuno R."/>
            <person name="Ohara R."/>
            <person name="Inamoto S."/>
            <person name="Aizawa H."/>
            <person name="Yuasa S."/>
            <person name="Nakajima D."/>
            <person name="Nagase T."/>
            <person name="Ohara O."/>
            <person name="Koga H."/>
        </authorList>
    </citation>
    <scope>NUCLEOTIDE SEQUENCE [LARGE SCALE MRNA] (ISOFORM 2)</scope>
    <source>
        <tissue>Brain</tissue>
    </source>
</reference>
<reference key="2">
    <citation type="journal article" date="2009" name="PLoS Biol.">
        <title>Lineage-specific biology revealed by a finished genome assembly of the mouse.</title>
        <authorList>
            <person name="Church D.M."/>
            <person name="Goodstadt L."/>
            <person name="Hillier L.W."/>
            <person name="Zody M.C."/>
            <person name="Goldstein S."/>
            <person name="She X."/>
            <person name="Bult C.J."/>
            <person name="Agarwala R."/>
            <person name="Cherry J.L."/>
            <person name="DiCuccio M."/>
            <person name="Hlavina W."/>
            <person name="Kapustin Y."/>
            <person name="Meric P."/>
            <person name="Maglott D."/>
            <person name="Birtle Z."/>
            <person name="Marques A.C."/>
            <person name="Graves T."/>
            <person name="Zhou S."/>
            <person name="Teague B."/>
            <person name="Potamousis K."/>
            <person name="Churas C."/>
            <person name="Place M."/>
            <person name="Herschleb J."/>
            <person name="Runnheim R."/>
            <person name="Forrest D."/>
            <person name="Amos-Landgraf J."/>
            <person name="Schwartz D.C."/>
            <person name="Cheng Z."/>
            <person name="Lindblad-Toh K."/>
            <person name="Eichler E.E."/>
            <person name="Ponting C.P."/>
        </authorList>
    </citation>
    <scope>NUCLEOTIDE SEQUENCE [LARGE SCALE GENOMIC DNA]</scope>
    <source>
        <strain>C57BL/6J</strain>
    </source>
</reference>
<reference key="3">
    <citation type="journal article" date="2005" name="Science">
        <title>The transcriptional landscape of the mammalian genome.</title>
        <authorList>
            <person name="Carninci P."/>
            <person name="Kasukawa T."/>
            <person name="Katayama S."/>
            <person name="Gough J."/>
            <person name="Frith M.C."/>
            <person name="Maeda N."/>
            <person name="Oyama R."/>
            <person name="Ravasi T."/>
            <person name="Lenhard B."/>
            <person name="Wells C."/>
            <person name="Kodzius R."/>
            <person name="Shimokawa K."/>
            <person name="Bajic V.B."/>
            <person name="Brenner S.E."/>
            <person name="Batalov S."/>
            <person name="Forrest A.R."/>
            <person name="Zavolan M."/>
            <person name="Davis M.J."/>
            <person name="Wilming L.G."/>
            <person name="Aidinis V."/>
            <person name="Allen J.E."/>
            <person name="Ambesi-Impiombato A."/>
            <person name="Apweiler R."/>
            <person name="Aturaliya R.N."/>
            <person name="Bailey T.L."/>
            <person name="Bansal M."/>
            <person name="Baxter L."/>
            <person name="Beisel K.W."/>
            <person name="Bersano T."/>
            <person name="Bono H."/>
            <person name="Chalk A.M."/>
            <person name="Chiu K.P."/>
            <person name="Choudhary V."/>
            <person name="Christoffels A."/>
            <person name="Clutterbuck D.R."/>
            <person name="Crowe M.L."/>
            <person name="Dalla E."/>
            <person name="Dalrymple B.P."/>
            <person name="de Bono B."/>
            <person name="Della Gatta G."/>
            <person name="di Bernardo D."/>
            <person name="Down T."/>
            <person name="Engstrom P."/>
            <person name="Fagiolini M."/>
            <person name="Faulkner G."/>
            <person name="Fletcher C.F."/>
            <person name="Fukushima T."/>
            <person name="Furuno M."/>
            <person name="Futaki S."/>
            <person name="Gariboldi M."/>
            <person name="Georgii-Hemming P."/>
            <person name="Gingeras T.R."/>
            <person name="Gojobori T."/>
            <person name="Green R.E."/>
            <person name="Gustincich S."/>
            <person name="Harbers M."/>
            <person name="Hayashi Y."/>
            <person name="Hensch T.K."/>
            <person name="Hirokawa N."/>
            <person name="Hill D."/>
            <person name="Huminiecki L."/>
            <person name="Iacono M."/>
            <person name="Ikeo K."/>
            <person name="Iwama A."/>
            <person name="Ishikawa T."/>
            <person name="Jakt M."/>
            <person name="Kanapin A."/>
            <person name="Katoh M."/>
            <person name="Kawasawa Y."/>
            <person name="Kelso J."/>
            <person name="Kitamura H."/>
            <person name="Kitano H."/>
            <person name="Kollias G."/>
            <person name="Krishnan S.P."/>
            <person name="Kruger A."/>
            <person name="Kummerfeld S.K."/>
            <person name="Kurochkin I.V."/>
            <person name="Lareau L.F."/>
            <person name="Lazarevic D."/>
            <person name="Lipovich L."/>
            <person name="Liu J."/>
            <person name="Liuni S."/>
            <person name="McWilliam S."/>
            <person name="Madan Babu M."/>
            <person name="Madera M."/>
            <person name="Marchionni L."/>
            <person name="Matsuda H."/>
            <person name="Matsuzawa S."/>
            <person name="Miki H."/>
            <person name="Mignone F."/>
            <person name="Miyake S."/>
            <person name="Morris K."/>
            <person name="Mottagui-Tabar S."/>
            <person name="Mulder N."/>
            <person name="Nakano N."/>
            <person name="Nakauchi H."/>
            <person name="Ng P."/>
            <person name="Nilsson R."/>
            <person name="Nishiguchi S."/>
            <person name="Nishikawa S."/>
            <person name="Nori F."/>
            <person name="Ohara O."/>
            <person name="Okazaki Y."/>
            <person name="Orlando V."/>
            <person name="Pang K.C."/>
            <person name="Pavan W.J."/>
            <person name="Pavesi G."/>
            <person name="Pesole G."/>
            <person name="Petrovsky N."/>
            <person name="Piazza S."/>
            <person name="Reed J."/>
            <person name="Reid J.F."/>
            <person name="Ring B.Z."/>
            <person name="Ringwald M."/>
            <person name="Rost B."/>
            <person name="Ruan Y."/>
            <person name="Salzberg S.L."/>
            <person name="Sandelin A."/>
            <person name="Schneider C."/>
            <person name="Schoenbach C."/>
            <person name="Sekiguchi K."/>
            <person name="Semple C.A."/>
            <person name="Seno S."/>
            <person name="Sessa L."/>
            <person name="Sheng Y."/>
            <person name="Shibata Y."/>
            <person name="Shimada H."/>
            <person name="Shimada K."/>
            <person name="Silva D."/>
            <person name="Sinclair B."/>
            <person name="Sperling S."/>
            <person name="Stupka E."/>
            <person name="Sugiura K."/>
            <person name="Sultana R."/>
            <person name="Takenaka Y."/>
            <person name="Taki K."/>
            <person name="Tammoja K."/>
            <person name="Tan S.L."/>
            <person name="Tang S."/>
            <person name="Taylor M.S."/>
            <person name="Tegner J."/>
            <person name="Teichmann S.A."/>
            <person name="Ueda H.R."/>
            <person name="van Nimwegen E."/>
            <person name="Verardo R."/>
            <person name="Wei C.L."/>
            <person name="Yagi K."/>
            <person name="Yamanishi H."/>
            <person name="Zabarovsky E."/>
            <person name="Zhu S."/>
            <person name="Zimmer A."/>
            <person name="Hide W."/>
            <person name="Bult C."/>
            <person name="Grimmond S.M."/>
            <person name="Teasdale R.D."/>
            <person name="Liu E.T."/>
            <person name="Brusic V."/>
            <person name="Quackenbush J."/>
            <person name="Wahlestedt C."/>
            <person name="Mattick J.S."/>
            <person name="Hume D.A."/>
            <person name="Kai C."/>
            <person name="Sasaki D."/>
            <person name="Tomaru Y."/>
            <person name="Fukuda S."/>
            <person name="Kanamori-Katayama M."/>
            <person name="Suzuki M."/>
            <person name="Aoki J."/>
            <person name="Arakawa T."/>
            <person name="Iida J."/>
            <person name="Imamura K."/>
            <person name="Itoh M."/>
            <person name="Kato T."/>
            <person name="Kawaji H."/>
            <person name="Kawagashira N."/>
            <person name="Kawashima T."/>
            <person name="Kojima M."/>
            <person name="Kondo S."/>
            <person name="Konno H."/>
            <person name="Nakano K."/>
            <person name="Ninomiya N."/>
            <person name="Nishio T."/>
            <person name="Okada M."/>
            <person name="Plessy C."/>
            <person name="Shibata K."/>
            <person name="Shiraki T."/>
            <person name="Suzuki S."/>
            <person name="Tagami M."/>
            <person name="Waki K."/>
            <person name="Watahiki A."/>
            <person name="Okamura-Oho Y."/>
            <person name="Suzuki H."/>
            <person name="Kawai J."/>
            <person name="Hayashizaki Y."/>
        </authorList>
    </citation>
    <scope>NUCLEOTIDE SEQUENCE [LARGE SCALE MRNA] OF 1865-2057</scope>
    <source>
        <strain>C57BL/6J</strain>
        <tissue>Testis</tissue>
    </source>
</reference>
<reference key="4">
    <citation type="journal article" date="2010" name="Cell">
        <title>A tissue-specific atlas of mouse protein phosphorylation and expression.</title>
        <authorList>
            <person name="Huttlin E.L."/>
            <person name="Jedrychowski M.P."/>
            <person name="Elias J.E."/>
            <person name="Goswami T."/>
            <person name="Rad R."/>
            <person name="Beausoleil S.A."/>
            <person name="Villen J."/>
            <person name="Haas W."/>
            <person name="Sowa M.E."/>
            <person name="Gygi S.P."/>
        </authorList>
    </citation>
    <scope>PHOSPHORYLATION [LARGE SCALE ANALYSIS] AT SER-142; SER-152; SER-305; SER-308; SER-324; SER-330; SER-377; SER-381; SER-389; SER-611; SER-689; THR-692; THR-695; SER-728; SER-953; SER-994 AND SER-1324</scope>
    <scope>IDENTIFICATION BY MASS SPECTROMETRY [LARGE SCALE ANALYSIS]</scope>
    <source>
        <tissue>Brain</tissue>
        <tissue>Brown adipose tissue</tissue>
        <tissue>Heart</tissue>
        <tissue>Kidney</tissue>
        <tissue>Liver</tissue>
        <tissue>Lung</tissue>
        <tissue>Pancreas</tissue>
        <tissue>Spleen</tissue>
        <tissue>Testis</tissue>
    </source>
</reference>
<feature type="chain" id="PRO_0000286590" description="Rho guanine nucleotide exchange factor 17">
    <location>
        <begin position="1"/>
        <end position="2057"/>
    </location>
</feature>
<feature type="domain" description="DH" evidence="3">
    <location>
        <begin position="1059"/>
        <end position="1247"/>
    </location>
</feature>
<feature type="region of interest" description="Disordered" evidence="4">
    <location>
        <begin position="20"/>
        <end position="361"/>
    </location>
</feature>
<feature type="region of interest" description="Disordered" evidence="4">
    <location>
        <begin position="375"/>
        <end position="461"/>
    </location>
</feature>
<feature type="region of interest" description="Disordered" evidence="4">
    <location>
        <begin position="481"/>
        <end position="559"/>
    </location>
</feature>
<feature type="region of interest" description="Disordered" evidence="4">
    <location>
        <begin position="615"/>
        <end position="647"/>
    </location>
</feature>
<feature type="region of interest" description="Disordered" evidence="4">
    <location>
        <begin position="663"/>
        <end position="952"/>
    </location>
</feature>
<feature type="region of interest" description="Disordered" evidence="4">
    <location>
        <begin position="1015"/>
        <end position="1054"/>
    </location>
</feature>
<feature type="region of interest" description="Disordered" evidence="4">
    <location>
        <begin position="1555"/>
        <end position="1713"/>
    </location>
</feature>
<feature type="region of interest" description="Disordered" evidence="4">
    <location>
        <begin position="1983"/>
        <end position="2050"/>
    </location>
</feature>
<feature type="compositionally biased region" description="Low complexity" evidence="4">
    <location>
        <begin position="227"/>
        <end position="249"/>
    </location>
</feature>
<feature type="compositionally biased region" description="Gly residues" evidence="4">
    <location>
        <begin position="314"/>
        <end position="323"/>
    </location>
</feature>
<feature type="compositionally biased region" description="Polar residues" evidence="4">
    <location>
        <begin position="382"/>
        <end position="391"/>
    </location>
</feature>
<feature type="compositionally biased region" description="Basic and acidic residues" evidence="4">
    <location>
        <begin position="440"/>
        <end position="451"/>
    </location>
</feature>
<feature type="compositionally biased region" description="Low complexity" evidence="4">
    <location>
        <begin position="507"/>
        <end position="524"/>
    </location>
</feature>
<feature type="compositionally biased region" description="Polar residues" evidence="4">
    <location>
        <begin position="663"/>
        <end position="672"/>
    </location>
</feature>
<feature type="compositionally biased region" description="Polar residues" evidence="4">
    <location>
        <begin position="710"/>
        <end position="719"/>
    </location>
</feature>
<feature type="compositionally biased region" description="Polar residues" evidence="4">
    <location>
        <begin position="747"/>
        <end position="760"/>
    </location>
</feature>
<feature type="compositionally biased region" description="Basic and acidic residues" evidence="4">
    <location>
        <begin position="820"/>
        <end position="829"/>
    </location>
</feature>
<feature type="compositionally biased region" description="Basic residues" evidence="4">
    <location>
        <begin position="909"/>
        <end position="920"/>
    </location>
</feature>
<feature type="compositionally biased region" description="Basic and acidic residues" evidence="4">
    <location>
        <begin position="922"/>
        <end position="931"/>
    </location>
</feature>
<feature type="compositionally biased region" description="Polar residues" evidence="4">
    <location>
        <begin position="933"/>
        <end position="944"/>
    </location>
</feature>
<feature type="compositionally biased region" description="Pro residues" evidence="4">
    <location>
        <begin position="1015"/>
        <end position="1027"/>
    </location>
</feature>
<feature type="compositionally biased region" description="Acidic residues" evidence="4">
    <location>
        <begin position="1579"/>
        <end position="1589"/>
    </location>
</feature>
<feature type="compositionally biased region" description="Low complexity" evidence="4">
    <location>
        <begin position="1638"/>
        <end position="1674"/>
    </location>
</feature>
<feature type="modified residue" description="Phosphoserine" evidence="7">
    <location>
        <position position="142"/>
    </location>
</feature>
<feature type="modified residue" description="Phosphoserine" evidence="7">
    <location>
        <position position="152"/>
    </location>
</feature>
<feature type="modified residue" description="Phosphoserine" evidence="7">
    <location>
        <position position="305"/>
    </location>
</feature>
<feature type="modified residue" description="Phosphoserine" evidence="7">
    <location>
        <position position="308"/>
    </location>
</feature>
<feature type="modified residue" description="Phosphoserine" evidence="7">
    <location>
        <position position="324"/>
    </location>
</feature>
<feature type="modified residue" description="Phosphoserine" evidence="7">
    <location>
        <position position="330"/>
    </location>
</feature>
<feature type="modified residue" description="Phosphoserine" evidence="7">
    <location>
        <position position="377"/>
    </location>
</feature>
<feature type="modified residue" description="Phosphoserine" evidence="7">
    <location>
        <position position="381"/>
    </location>
</feature>
<feature type="modified residue" description="Phosphoserine" evidence="7">
    <location>
        <position position="389"/>
    </location>
</feature>
<feature type="modified residue" description="Phosphoserine" evidence="2">
    <location>
        <position position="404"/>
    </location>
</feature>
<feature type="modified residue" description="Phosphoserine" evidence="2">
    <location>
        <position position="414"/>
    </location>
</feature>
<feature type="modified residue" description="Phosphoserine" evidence="2">
    <location>
        <position position="456"/>
    </location>
</feature>
<feature type="modified residue" description="Phosphoserine" evidence="2">
    <location>
        <position position="538"/>
    </location>
</feature>
<feature type="modified residue" description="Phosphoserine" evidence="7">
    <location>
        <position position="611"/>
    </location>
</feature>
<feature type="modified residue" description="Phosphoserine" evidence="7">
    <location>
        <position position="689"/>
    </location>
</feature>
<feature type="modified residue" description="Phosphothreonine" evidence="7">
    <location>
        <position position="692"/>
    </location>
</feature>
<feature type="modified residue" description="Phosphothreonine" evidence="7">
    <location>
        <position position="695"/>
    </location>
</feature>
<feature type="modified residue" description="Phosphoserine" evidence="7">
    <location>
        <position position="728"/>
    </location>
</feature>
<feature type="modified residue" description="Phosphoserine" evidence="2">
    <location>
        <position position="906"/>
    </location>
</feature>
<feature type="modified residue" description="Phosphoserine" evidence="7">
    <location>
        <position position="953"/>
    </location>
</feature>
<feature type="modified residue" description="Phosphoserine" evidence="7">
    <location>
        <position position="994"/>
    </location>
</feature>
<feature type="modified residue" description="Phosphoserine" evidence="7">
    <location>
        <position position="1324"/>
    </location>
</feature>
<feature type="splice variant" id="VSP_025104" description="In isoform 2." evidence="5">
    <location>
        <begin position="1"/>
        <end position="1009"/>
    </location>
</feature>
<feature type="splice variant" id="VSP_025105" description="In isoform 2." evidence="5">
    <original>DVPAPGPVDLPCLPPSAPPSTETKPSGAARATPDEPAPASKCCSKPQV</original>
    <variation>MLQMVKTLAQFTIALEDMRDLGSAAASGESAGGGDGGSDTAEEPGEAQ</variation>
    <location>
        <begin position="1010"/>
        <end position="1057"/>
    </location>
</feature>
<feature type="sequence conflict" description="In Ref. 1; BAC65532." evidence="6" ref="1">
    <original>I</original>
    <variation>V</variation>
    <location>
        <position position="1366"/>
    </location>
</feature>
<feature type="sequence conflict" description="In Ref. 1; BAC65532." evidence="6" ref="1">
    <original>N</original>
    <variation>K</variation>
    <location>
        <position position="1566"/>
    </location>
</feature>
<organism>
    <name type="scientific">Mus musculus</name>
    <name type="common">Mouse</name>
    <dbReference type="NCBI Taxonomy" id="10090"/>
    <lineage>
        <taxon>Eukaryota</taxon>
        <taxon>Metazoa</taxon>
        <taxon>Chordata</taxon>
        <taxon>Craniata</taxon>
        <taxon>Vertebrata</taxon>
        <taxon>Euteleostomi</taxon>
        <taxon>Mammalia</taxon>
        <taxon>Eutheria</taxon>
        <taxon>Euarchontoglires</taxon>
        <taxon>Glires</taxon>
        <taxon>Rodentia</taxon>
        <taxon>Myomorpha</taxon>
        <taxon>Muroidea</taxon>
        <taxon>Muridae</taxon>
        <taxon>Murinae</taxon>
        <taxon>Mus</taxon>
        <taxon>Mus</taxon>
    </lineage>
</organism>
<comment type="function">
    <text evidence="1">Acts as a guanine nucleotide exchange factor (GEF) for RhoA GTPases.</text>
</comment>
<comment type="alternative products">
    <event type="alternative splicing"/>
    <isoform>
        <id>Q80U35-1</id>
        <name>1</name>
        <sequence type="displayed"/>
    </isoform>
    <isoform>
        <id>Q80U35-2</id>
        <name>2</name>
        <sequence type="described" ref="VSP_025104 VSP_025105"/>
    </isoform>
</comment>
<comment type="sequence caution" evidence="6">
    <conflict type="erroneous initiation">
        <sequence resource="EMBL-CDS" id="BAC65532"/>
    </conflict>
</comment>
<gene>
    <name type="primary">Arhgef17</name>
    <name type="synonym">Kiaa0337</name>
</gene>
<name>ARHGH_MOUSE</name>
<accession>Q80U35</accession>
<accession>Q8BZY4</accession>
<proteinExistence type="evidence at protein level"/>
<keyword id="KW-0025">Alternative splicing</keyword>
<keyword id="KW-0344">Guanine-nucleotide releasing factor</keyword>
<keyword id="KW-0597">Phosphoprotein</keyword>
<keyword id="KW-1185">Reference proteome</keyword>
<evidence type="ECO:0000250" key="1"/>
<evidence type="ECO:0000250" key="2">
    <source>
        <dbReference type="UniProtKB" id="Q96PE2"/>
    </source>
</evidence>
<evidence type="ECO:0000255" key="3">
    <source>
        <dbReference type="PROSITE-ProRule" id="PRU00062"/>
    </source>
</evidence>
<evidence type="ECO:0000256" key="4">
    <source>
        <dbReference type="SAM" id="MobiDB-lite"/>
    </source>
</evidence>
<evidence type="ECO:0000303" key="5">
    <source>
    </source>
</evidence>
<evidence type="ECO:0000305" key="6"/>
<evidence type="ECO:0007744" key="7">
    <source>
    </source>
</evidence>
<dbReference type="EMBL" id="AK122250">
    <property type="protein sequence ID" value="BAC65532.1"/>
    <property type="status" value="ALT_INIT"/>
    <property type="molecule type" value="mRNA"/>
</dbReference>
<dbReference type="EMBL" id="AC116586">
    <property type="status" value="NOT_ANNOTATED_CDS"/>
    <property type="molecule type" value="Genomic_DNA"/>
</dbReference>
<dbReference type="EMBL" id="AC150744">
    <property type="status" value="NOT_ANNOTATED_CDS"/>
    <property type="molecule type" value="Genomic_DNA"/>
</dbReference>
<dbReference type="EMBL" id="AK033211">
    <property type="protein sequence ID" value="BAC28199.2"/>
    <property type="status" value="ALT_SEQ"/>
    <property type="molecule type" value="mRNA"/>
</dbReference>
<dbReference type="CCDS" id="CCDS40040.1">
    <molecule id="Q80U35-1"/>
</dbReference>
<dbReference type="RefSeq" id="NP_001074585.1">
    <molecule id="Q80U35-1"/>
    <property type="nucleotide sequence ID" value="NM_001081116.1"/>
</dbReference>
<dbReference type="SMR" id="Q80U35"/>
<dbReference type="BioGRID" id="228883">
    <property type="interactions" value="14"/>
</dbReference>
<dbReference type="FunCoup" id="Q80U35">
    <property type="interactions" value="980"/>
</dbReference>
<dbReference type="IntAct" id="Q80U35">
    <property type="interactions" value="2"/>
</dbReference>
<dbReference type="STRING" id="10090.ENSMUSP00000102647"/>
<dbReference type="GlyGen" id="Q80U35">
    <property type="glycosylation" value="5 sites, 1 N-linked glycan (1 site)"/>
</dbReference>
<dbReference type="iPTMnet" id="Q80U35"/>
<dbReference type="PhosphoSitePlus" id="Q80U35"/>
<dbReference type="jPOST" id="Q80U35"/>
<dbReference type="PaxDb" id="10090-ENSMUSP00000102647"/>
<dbReference type="PeptideAtlas" id="Q80U35"/>
<dbReference type="ProteomicsDB" id="273933">
    <molecule id="Q80U35-1"/>
</dbReference>
<dbReference type="ProteomicsDB" id="273934">
    <molecule id="Q80U35-2"/>
</dbReference>
<dbReference type="Pumba" id="Q80U35"/>
<dbReference type="Antibodypedia" id="947">
    <property type="antibodies" value="74 antibodies from 27 providers"/>
</dbReference>
<dbReference type="Ensembl" id="ENSMUST00000107032.3">
    <molecule id="Q80U35-1"/>
    <property type="protein sequence ID" value="ENSMUSP00000102647.2"/>
    <property type="gene ID" value="ENSMUSG00000032875.9"/>
</dbReference>
<dbReference type="Ensembl" id="ENSMUST00000209041.2">
    <molecule id="Q80U35-2"/>
    <property type="protein sequence ID" value="ENSMUSP00000146564.2"/>
    <property type="gene ID" value="ENSMUSG00000032875.9"/>
</dbReference>
<dbReference type="GeneID" id="207212"/>
<dbReference type="KEGG" id="mmu:207212"/>
<dbReference type="UCSC" id="uc009inu.1">
    <molecule id="Q80U35-2"/>
    <property type="organism name" value="mouse"/>
</dbReference>
<dbReference type="UCSC" id="uc009inv.1">
    <molecule id="Q80U35-1"/>
    <property type="organism name" value="mouse"/>
</dbReference>
<dbReference type="AGR" id="MGI:2673002"/>
<dbReference type="CTD" id="9828"/>
<dbReference type="MGI" id="MGI:2673002">
    <property type="gene designation" value="Arhgef17"/>
</dbReference>
<dbReference type="VEuPathDB" id="HostDB:ENSMUSG00000032875"/>
<dbReference type="eggNOG" id="KOG3522">
    <property type="taxonomic scope" value="Eukaryota"/>
</dbReference>
<dbReference type="GeneTree" id="ENSGT00940000153798"/>
<dbReference type="HOGENOM" id="CLU_237760_0_0_1"/>
<dbReference type="InParanoid" id="Q80U35"/>
<dbReference type="OMA" id="IPQRHRT"/>
<dbReference type="OrthoDB" id="4066896at2759"/>
<dbReference type="PhylomeDB" id="Q80U35"/>
<dbReference type="TreeFam" id="TF324157"/>
<dbReference type="Reactome" id="R-MMU-193648">
    <property type="pathway name" value="NRAGE signals death through JNK"/>
</dbReference>
<dbReference type="Reactome" id="R-MMU-416482">
    <property type="pathway name" value="G alpha (12/13) signalling events"/>
</dbReference>
<dbReference type="Reactome" id="R-MMU-8980692">
    <property type="pathway name" value="RHOA GTPase cycle"/>
</dbReference>
<dbReference type="Reactome" id="R-MMU-9013026">
    <property type="pathway name" value="RHOB GTPase cycle"/>
</dbReference>
<dbReference type="Reactome" id="R-MMU-9013106">
    <property type="pathway name" value="RHOC GTPase cycle"/>
</dbReference>
<dbReference type="BioGRID-ORCS" id="207212">
    <property type="hits" value="1 hit in 79 CRISPR screens"/>
</dbReference>
<dbReference type="ChiTaRS" id="Arhgef17">
    <property type="organism name" value="mouse"/>
</dbReference>
<dbReference type="PRO" id="PR:Q80U35"/>
<dbReference type="Proteomes" id="UP000000589">
    <property type="component" value="Chromosome 7"/>
</dbReference>
<dbReference type="RNAct" id="Q80U35">
    <property type="molecule type" value="protein"/>
</dbReference>
<dbReference type="Bgee" id="ENSMUSG00000032875">
    <property type="expression patterns" value="Expressed in dentate gyrus of hippocampal formation granule cell and 203 other cell types or tissues"/>
</dbReference>
<dbReference type="ExpressionAtlas" id="Q80U35">
    <property type="expression patterns" value="baseline and differential"/>
</dbReference>
<dbReference type="GO" id="GO:0005085">
    <property type="term" value="F:guanyl-nucleotide exchange factor activity"/>
    <property type="evidence" value="ECO:0000266"/>
    <property type="project" value="MGI"/>
</dbReference>
<dbReference type="GO" id="GO:0030036">
    <property type="term" value="P:actin cytoskeleton organization"/>
    <property type="evidence" value="ECO:0000266"/>
    <property type="project" value="MGI"/>
</dbReference>
<dbReference type="CDD" id="cd00160">
    <property type="entry name" value="RhoGEF"/>
    <property type="match status" value="1"/>
</dbReference>
<dbReference type="FunFam" id="1.20.900.10:FF:000025">
    <property type="entry name" value="Rho guanine nucleotide exchange factor 17"/>
    <property type="match status" value="1"/>
</dbReference>
<dbReference type="FunFam" id="2.130.10.10:FF:000206">
    <property type="entry name" value="Rho guanine nucleotide exchange factor 17"/>
    <property type="match status" value="1"/>
</dbReference>
<dbReference type="FunFam" id="2.30.29.30:FF:000434">
    <property type="entry name" value="Rho guanine nucleotide exchange factor 17"/>
    <property type="match status" value="1"/>
</dbReference>
<dbReference type="Gene3D" id="1.20.900.10">
    <property type="entry name" value="Dbl homology (DH) domain"/>
    <property type="match status" value="1"/>
</dbReference>
<dbReference type="Gene3D" id="2.30.29.30">
    <property type="entry name" value="Pleckstrin-homology domain (PH domain)/Phosphotyrosine-binding domain (PTB)"/>
    <property type="match status" value="1"/>
</dbReference>
<dbReference type="Gene3D" id="2.130.10.10">
    <property type="entry name" value="YVTN repeat-like/Quinoprotein amine dehydrogenase"/>
    <property type="match status" value="1"/>
</dbReference>
<dbReference type="InterPro" id="IPR039919">
    <property type="entry name" value="ARHGEF10/ARHGEF17"/>
</dbReference>
<dbReference type="InterPro" id="IPR035899">
    <property type="entry name" value="DBL_dom_sf"/>
</dbReference>
<dbReference type="InterPro" id="IPR000219">
    <property type="entry name" value="DH_dom"/>
</dbReference>
<dbReference type="InterPro" id="IPR011993">
    <property type="entry name" value="PH-like_dom_sf"/>
</dbReference>
<dbReference type="InterPro" id="IPR015943">
    <property type="entry name" value="WD40/YVTN_repeat-like_dom_sf"/>
</dbReference>
<dbReference type="InterPro" id="IPR036322">
    <property type="entry name" value="WD40_repeat_dom_sf"/>
</dbReference>
<dbReference type="PANTHER" id="PTHR12877">
    <property type="entry name" value="RHO GUANINE NUCLEOTIDE EXCHANGE FACTOR"/>
    <property type="match status" value="1"/>
</dbReference>
<dbReference type="PANTHER" id="PTHR12877:SF15">
    <property type="entry name" value="RHO GUANINE NUCLEOTIDE EXCHANGE FACTOR 17"/>
    <property type="match status" value="1"/>
</dbReference>
<dbReference type="Pfam" id="PF19057">
    <property type="entry name" value="PH_19"/>
    <property type="match status" value="1"/>
</dbReference>
<dbReference type="Pfam" id="PF00621">
    <property type="entry name" value="RhoGEF"/>
    <property type="match status" value="1"/>
</dbReference>
<dbReference type="Pfam" id="PF19056">
    <property type="entry name" value="WD40_2"/>
    <property type="match status" value="1"/>
</dbReference>
<dbReference type="SMART" id="SM00325">
    <property type="entry name" value="RhoGEF"/>
    <property type="match status" value="1"/>
</dbReference>
<dbReference type="SUPFAM" id="SSF48065">
    <property type="entry name" value="DBL homology domain (DH-domain)"/>
    <property type="match status" value="1"/>
</dbReference>
<dbReference type="SUPFAM" id="SSF50729">
    <property type="entry name" value="PH domain-like"/>
    <property type="match status" value="1"/>
</dbReference>
<dbReference type="SUPFAM" id="SSF50978">
    <property type="entry name" value="WD40 repeat-like"/>
    <property type="match status" value="1"/>
</dbReference>
<dbReference type="PROSITE" id="PS50010">
    <property type="entry name" value="DH_2"/>
    <property type="match status" value="1"/>
</dbReference>
<sequence length="2057" mass="221671">MADGSPRPPLYRSVSFKLLERWSGGPGPREEDADTPGLRRRASCRPAAAVPGQPSRRVSKLASGPPAAPAQPRPLRSLSPSVRQLSRRFDAAGLDDDSTGTRDGGCSSGTTEEAAEGSERGAWPSVTEMRKLFGGPSSRRPSMDSEALGSTSPDRVSWEPPTRDPRQPPTPPPRTCFPLAGLRSARPLSGPGIEGRRRRQHQQQERAQRPADGLHSWHSFSQPQAGARASSSSSIASSYPVSRSRAASSSEEEEEGPQSQLGPQSPAYLGGHSSGSDEDPNGEDGRRWRGRGLRPGRSQLVHGCSQDSDELNPGGLGSAGGVGSPEPPTSPRTSMDEWGTGTQPCLPGPQESLRPMSDTGGAPFRVAKVSFPAYLASPAGSRGSSRYSSTETLKDDDLWSSRSSVGWGVYRSPSFGTGDGLLLRPQTRSRSKGPVGTARPLRDGGLDLDKNRQRKSLSNPDIASETLTLLSFLRSDLSELRVRKPSGGPGNRPLDGRDSPSAGSPMEQSESTLSQSPTSPTTRPTLKDLTATLRRAKSFSCSEKPMARRLLRTSALKPSSSELLLAGSGAEEDPLPLVVQDQYVQEARQVFEKIQRMGAQQDDGNDVCPTSPDWAGDMTQGHRSQEELSGPESNLTDEGIGADPEPLGAAFCSLDPAGVWRPLSSTSAQTNHHLGAGTEDSLGGRALVSPETPPTPGALRRRRKVPPSGPNGTELSNGEASEAYRSLSDPIPQRHRAATSEEPSGFSVDSNLLGSLNSKTGLPVTPAMDEGLTSGHSDWSVVSEENKDYQEVIQSIVQGPGALGRMGEDRIAGKTPKKKSLSDPSRRGELTGPGFEGPGGEPIREVEPMLPPSSSEPILAEQWTEPEDPAPARGRAQSERSLPAPPASSTAHHDFHLDPKLTSVLSPRLTRRGSKKRPARSSHQELRREEGNQDQTGSLTQTRSSSKHVRHASVPATFTPIVVPEPAMSVGPPVAAPEPVGFPVRGHPALQAPSLEDVTKRYMLTLHSGDVPAPGPVDLPCLPPSAPPSTETKPSGAARATPDEPAPASKCCSKPQVDMRKHVTMTLLDTEQSYVESLRTLMQGYMQPLKQPENSLLCDPSLVDEIFDQIPELLEHHEQFLEQVRHCVQTWHAQQKVGALLVQSFSKDVLVNIYSAYIDNFLNAKDAVRVAKEARPAFLKFLEQSMRENKEKQALSDLMIKPVQRIPRYELLVKDLLKHTPEDHPDHPLLLDAQRNIKQVAERINKGVRSAEEAERHARVLQEIEAHIEGMEDLQAPLRRFLRQEMVIEVKAIGGKKDRSLFLFTDLIVCTTLKRKSGSLRRSSMSLYTAASVIDTASKYKMLWKLPLEDTDIIKGASQATNRETIQKAISRLDEDLATLGQMSKLSESLGFPHQSLDDALRDLSAAMHRDLSEKQALCCSLAFPPTKLELCATRPEGTDSYIFEFPHPDARLGFEQAFDEAKRKLASSKSCLDPEFLKAIPIMKTRSGMQFSCAAPTFSSCPEPAPEVWVCNSDGYVGQVCLLSLRAEPDVEACIAVCSARILCIGAVPGLQPRCPREQPEPLRNPPETTLESTGPELDVEATAEEEAATTLAEPGPQPCLHISISGSGLEMEPGPAKGDPQPELVPFDSDSDDESSPSPSGTLQSQASQSTISSSFGNEETPSSKEATAETTSSEEEQEPGFLSLSGSFGPGGPCGTSPMDGRALRRSSRGSFTRGSLEDLLSVDPEAYQSSVWLGTEDGCVHVYQSSDSIRDRRNSMKLQHAASVTCILYLNNKVFVSLANGELVVYQREAGRFWDPQNFKSMTLGSQGSPITKMVSVGGRLWCGCQNRVLVLSPDTLQLEHTFYVGQDSSRSVACMVDSSLGVWVTLKGSAHVCLYHPDTFEQLAEVDVTPPVHRMLAGSDAIIRQHKAACLRITALLVCAELLWVGTSAGVVLTIPTSPSTVSCPRAPLSPAGLCQGHTGHVRFLAAVQLPEGFNLLCSTPPPPPDTGPEKLPSLDHRDSPRRRGPTSARPKMLVISGGDGSEDFRLSSGGGGSSETVGRDDSTNHLLLWRV</sequence>